<gene>
    <name evidence="1" type="primary">purA</name>
    <name type="ordered locus">CBUD_1049</name>
</gene>
<comment type="function">
    <text evidence="1">Plays an important role in the de novo pathway of purine nucleotide biosynthesis. Catalyzes the first committed step in the biosynthesis of AMP from IMP.</text>
</comment>
<comment type="catalytic activity">
    <reaction evidence="1">
        <text>IMP + L-aspartate + GTP = N(6)-(1,2-dicarboxyethyl)-AMP + GDP + phosphate + 2 H(+)</text>
        <dbReference type="Rhea" id="RHEA:15753"/>
        <dbReference type="ChEBI" id="CHEBI:15378"/>
        <dbReference type="ChEBI" id="CHEBI:29991"/>
        <dbReference type="ChEBI" id="CHEBI:37565"/>
        <dbReference type="ChEBI" id="CHEBI:43474"/>
        <dbReference type="ChEBI" id="CHEBI:57567"/>
        <dbReference type="ChEBI" id="CHEBI:58053"/>
        <dbReference type="ChEBI" id="CHEBI:58189"/>
        <dbReference type="EC" id="6.3.4.4"/>
    </reaction>
</comment>
<comment type="cofactor">
    <cofactor evidence="1">
        <name>Mg(2+)</name>
        <dbReference type="ChEBI" id="CHEBI:18420"/>
    </cofactor>
    <text evidence="1">Binds 1 Mg(2+) ion per subunit.</text>
</comment>
<comment type="pathway">
    <text evidence="1">Purine metabolism; AMP biosynthesis via de novo pathway; AMP from IMP: step 1/2.</text>
</comment>
<comment type="subunit">
    <text evidence="1">Homodimer.</text>
</comment>
<comment type="subcellular location">
    <subcellularLocation>
        <location evidence="1">Cytoplasm</location>
    </subcellularLocation>
</comment>
<comment type="similarity">
    <text evidence="1">Belongs to the adenylosuccinate synthetase family.</text>
</comment>
<feature type="chain" id="PRO_0000337000" description="Adenylosuccinate synthetase">
    <location>
        <begin position="1"/>
        <end position="435"/>
    </location>
</feature>
<feature type="active site" description="Proton acceptor" evidence="1">
    <location>
        <position position="12"/>
    </location>
</feature>
<feature type="active site" description="Proton donor" evidence="1">
    <location>
        <position position="40"/>
    </location>
</feature>
<feature type="binding site" evidence="1">
    <location>
        <begin position="11"/>
        <end position="17"/>
    </location>
    <ligand>
        <name>GTP</name>
        <dbReference type="ChEBI" id="CHEBI:37565"/>
    </ligand>
</feature>
<feature type="binding site" description="in other chain" evidence="1">
    <location>
        <begin position="12"/>
        <end position="15"/>
    </location>
    <ligand>
        <name>IMP</name>
        <dbReference type="ChEBI" id="CHEBI:58053"/>
        <note>ligand shared between dimeric partners</note>
    </ligand>
</feature>
<feature type="binding site" evidence="1">
    <location>
        <position position="12"/>
    </location>
    <ligand>
        <name>Mg(2+)</name>
        <dbReference type="ChEBI" id="CHEBI:18420"/>
    </ligand>
</feature>
<feature type="binding site" description="in other chain" evidence="1">
    <location>
        <begin position="37"/>
        <end position="40"/>
    </location>
    <ligand>
        <name>IMP</name>
        <dbReference type="ChEBI" id="CHEBI:58053"/>
        <note>ligand shared between dimeric partners</note>
    </ligand>
</feature>
<feature type="binding site" evidence="1">
    <location>
        <begin position="39"/>
        <end position="41"/>
    </location>
    <ligand>
        <name>GTP</name>
        <dbReference type="ChEBI" id="CHEBI:37565"/>
    </ligand>
</feature>
<feature type="binding site" evidence="1">
    <location>
        <position position="39"/>
    </location>
    <ligand>
        <name>Mg(2+)</name>
        <dbReference type="ChEBI" id="CHEBI:18420"/>
    </ligand>
</feature>
<feature type="binding site" description="in other chain" evidence="1">
    <location>
        <position position="128"/>
    </location>
    <ligand>
        <name>IMP</name>
        <dbReference type="ChEBI" id="CHEBI:58053"/>
        <note>ligand shared between dimeric partners</note>
    </ligand>
</feature>
<feature type="binding site" evidence="1">
    <location>
        <position position="142"/>
    </location>
    <ligand>
        <name>IMP</name>
        <dbReference type="ChEBI" id="CHEBI:58053"/>
        <note>ligand shared between dimeric partners</note>
    </ligand>
</feature>
<feature type="binding site" description="in other chain" evidence="1">
    <location>
        <position position="223"/>
    </location>
    <ligand>
        <name>IMP</name>
        <dbReference type="ChEBI" id="CHEBI:58053"/>
        <note>ligand shared between dimeric partners</note>
    </ligand>
</feature>
<feature type="binding site" description="in other chain" evidence="1">
    <location>
        <position position="238"/>
    </location>
    <ligand>
        <name>IMP</name>
        <dbReference type="ChEBI" id="CHEBI:58053"/>
        <note>ligand shared between dimeric partners</note>
    </ligand>
</feature>
<feature type="binding site" evidence="1">
    <location>
        <begin position="298"/>
        <end position="304"/>
    </location>
    <ligand>
        <name>substrate</name>
    </ligand>
</feature>
<feature type="binding site" description="in other chain" evidence="1">
    <location>
        <position position="302"/>
    </location>
    <ligand>
        <name>IMP</name>
        <dbReference type="ChEBI" id="CHEBI:58053"/>
        <note>ligand shared between dimeric partners</note>
    </ligand>
</feature>
<feature type="binding site" evidence="1">
    <location>
        <position position="304"/>
    </location>
    <ligand>
        <name>GTP</name>
        <dbReference type="ChEBI" id="CHEBI:37565"/>
    </ligand>
</feature>
<feature type="binding site" evidence="1">
    <location>
        <begin position="330"/>
        <end position="332"/>
    </location>
    <ligand>
        <name>GTP</name>
        <dbReference type="ChEBI" id="CHEBI:37565"/>
    </ligand>
</feature>
<feature type="binding site" evidence="1">
    <location>
        <begin position="412"/>
        <end position="414"/>
    </location>
    <ligand>
        <name>GTP</name>
        <dbReference type="ChEBI" id="CHEBI:37565"/>
    </ligand>
</feature>
<accession>A9KCC7</accession>
<dbReference type="EC" id="6.3.4.4" evidence="1"/>
<dbReference type="EMBL" id="CP000733">
    <property type="protein sequence ID" value="ABS78481.1"/>
    <property type="molecule type" value="Genomic_DNA"/>
</dbReference>
<dbReference type="RefSeq" id="WP_011996886.1">
    <property type="nucleotide sequence ID" value="NC_009727.1"/>
</dbReference>
<dbReference type="SMR" id="A9KCC7"/>
<dbReference type="KEGG" id="cbd:CBUD_1049"/>
<dbReference type="HOGENOM" id="CLU_029848_0_0_6"/>
<dbReference type="UniPathway" id="UPA00075">
    <property type="reaction ID" value="UER00335"/>
</dbReference>
<dbReference type="Proteomes" id="UP000008555">
    <property type="component" value="Chromosome"/>
</dbReference>
<dbReference type="GO" id="GO:0005737">
    <property type="term" value="C:cytoplasm"/>
    <property type="evidence" value="ECO:0007669"/>
    <property type="project" value="UniProtKB-SubCell"/>
</dbReference>
<dbReference type="GO" id="GO:0004019">
    <property type="term" value="F:adenylosuccinate synthase activity"/>
    <property type="evidence" value="ECO:0007669"/>
    <property type="project" value="UniProtKB-UniRule"/>
</dbReference>
<dbReference type="GO" id="GO:0005525">
    <property type="term" value="F:GTP binding"/>
    <property type="evidence" value="ECO:0007669"/>
    <property type="project" value="UniProtKB-UniRule"/>
</dbReference>
<dbReference type="GO" id="GO:0000287">
    <property type="term" value="F:magnesium ion binding"/>
    <property type="evidence" value="ECO:0007669"/>
    <property type="project" value="UniProtKB-UniRule"/>
</dbReference>
<dbReference type="GO" id="GO:0044208">
    <property type="term" value="P:'de novo' AMP biosynthetic process"/>
    <property type="evidence" value="ECO:0007669"/>
    <property type="project" value="UniProtKB-UniRule"/>
</dbReference>
<dbReference type="GO" id="GO:0046040">
    <property type="term" value="P:IMP metabolic process"/>
    <property type="evidence" value="ECO:0007669"/>
    <property type="project" value="TreeGrafter"/>
</dbReference>
<dbReference type="CDD" id="cd03108">
    <property type="entry name" value="AdSS"/>
    <property type="match status" value="1"/>
</dbReference>
<dbReference type="FunFam" id="1.10.300.10:FF:000001">
    <property type="entry name" value="Adenylosuccinate synthetase"/>
    <property type="match status" value="1"/>
</dbReference>
<dbReference type="FunFam" id="3.90.170.10:FF:000001">
    <property type="entry name" value="Adenylosuccinate synthetase"/>
    <property type="match status" value="1"/>
</dbReference>
<dbReference type="Gene3D" id="3.40.440.10">
    <property type="entry name" value="Adenylosuccinate Synthetase, subunit A, domain 1"/>
    <property type="match status" value="1"/>
</dbReference>
<dbReference type="Gene3D" id="1.10.300.10">
    <property type="entry name" value="Adenylosuccinate Synthetase, subunit A, domain 2"/>
    <property type="match status" value="1"/>
</dbReference>
<dbReference type="Gene3D" id="3.90.170.10">
    <property type="entry name" value="Adenylosuccinate Synthetase, subunit A, domain 3"/>
    <property type="match status" value="1"/>
</dbReference>
<dbReference type="HAMAP" id="MF_00011">
    <property type="entry name" value="Adenylosucc_synth"/>
    <property type="match status" value="1"/>
</dbReference>
<dbReference type="InterPro" id="IPR018220">
    <property type="entry name" value="Adenylosuccin_syn_GTP-bd"/>
</dbReference>
<dbReference type="InterPro" id="IPR033128">
    <property type="entry name" value="Adenylosuccin_syn_Lys_AS"/>
</dbReference>
<dbReference type="InterPro" id="IPR042109">
    <property type="entry name" value="Adenylosuccinate_synth_dom1"/>
</dbReference>
<dbReference type="InterPro" id="IPR042110">
    <property type="entry name" value="Adenylosuccinate_synth_dom2"/>
</dbReference>
<dbReference type="InterPro" id="IPR042111">
    <property type="entry name" value="Adenylosuccinate_synth_dom3"/>
</dbReference>
<dbReference type="InterPro" id="IPR001114">
    <property type="entry name" value="Adenylosuccinate_synthetase"/>
</dbReference>
<dbReference type="InterPro" id="IPR027417">
    <property type="entry name" value="P-loop_NTPase"/>
</dbReference>
<dbReference type="NCBIfam" id="NF002223">
    <property type="entry name" value="PRK01117.1"/>
    <property type="match status" value="1"/>
</dbReference>
<dbReference type="NCBIfam" id="TIGR00184">
    <property type="entry name" value="purA"/>
    <property type="match status" value="1"/>
</dbReference>
<dbReference type="PANTHER" id="PTHR11846">
    <property type="entry name" value="ADENYLOSUCCINATE SYNTHETASE"/>
    <property type="match status" value="1"/>
</dbReference>
<dbReference type="PANTHER" id="PTHR11846:SF0">
    <property type="entry name" value="ADENYLOSUCCINATE SYNTHETASE"/>
    <property type="match status" value="1"/>
</dbReference>
<dbReference type="Pfam" id="PF00709">
    <property type="entry name" value="Adenylsucc_synt"/>
    <property type="match status" value="1"/>
</dbReference>
<dbReference type="SMART" id="SM00788">
    <property type="entry name" value="Adenylsucc_synt"/>
    <property type="match status" value="1"/>
</dbReference>
<dbReference type="SUPFAM" id="SSF52540">
    <property type="entry name" value="P-loop containing nucleoside triphosphate hydrolases"/>
    <property type="match status" value="1"/>
</dbReference>
<dbReference type="PROSITE" id="PS01266">
    <property type="entry name" value="ADENYLOSUCCIN_SYN_1"/>
    <property type="match status" value="1"/>
</dbReference>
<dbReference type="PROSITE" id="PS00513">
    <property type="entry name" value="ADENYLOSUCCIN_SYN_2"/>
    <property type="match status" value="1"/>
</dbReference>
<name>PURA_COXBN</name>
<keyword id="KW-0963">Cytoplasm</keyword>
<keyword id="KW-0342">GTP-binding</keyword>
<keyword id="KW-0436">Ligase</keyword>
<keyword id="KW-0460">Magnesium</keyword>
<keyword id="KW-0479">Metal-binding</keyword>
<keyword id="KW-0547">Nucleotide-binding</keyword>
<keyword id="KW-0658">Purine biosynthesis</keyword>
<reference key="1">
    <citation type="journal article" date="2009" name="Infect. Immun.">
        <title>Comparative genomics reveal extensive transposon-mediated genomic plasticity and diversity among potential effector proteins within the genus Coxiella.</title>
        <authorList>
            <person name="Beare P.A."/>
            <person name="Unsworth N."/>
            <person name="Andoh M."/>
            <person name="Voth D.E."/>
            <person name="Omsland A."/>
            <person name="Gilk S.D."/>
            <person name="Williams K.P."/>
            <person name="Sobral B.W."/>
            <person name="Kupko J.J. III"/>
            <person name="Porcella S.F."/>
            <person name="Samuel J.E."/>
            <person name="Heinzen R.A."/>
        </authorList>
    </citation>
    <scope>NUCLEOTIDE SEQUENCE [LARGE SCALE GENOMIC DNA]</scope>
    <source>
        <strain>Dugway 5J108-111</strain>
    </source>
</reference>
<evidence type="ECO:0000255" key="1">
    <source>
        <dbReference type="HAMAP-Rule" id="MF_00011"/>
    </source>
</evidence>
<sequence length="435" mass="48016">MNIVILGTQWGDEGKGKIVDMLTEDVAAVVRFQGGHNAGHTLIIDGEKTILRLIPSGILREGVLCLIGNGVVLSPPALMEEIEELNAKGIPVTERLRISSACNLLLPYHVALDKAREAELGTKAIGTTGRGIGPAYEDKVARRGIRAMDLLHPNQLLEKIKKATAYHNIQLEHYYHQTPLDYQSIYNQLMEFREKIKPMIGDVSALLGNLRRQNKHIIFEGAQGSLLDIDLGTYPYVTSSNTTAGSAATGSGFGPLYFDRVLGITKAYVTRVGAGPFPTELTNEEGKKMAKRGNEFGSVTGRPRRCGWFDVISMRRTIQINSLTGIVLTKLDVLDEFAKIHLCTAYRCDGEVVNEPPFDQSLLESCEPVYEEMPGWQTSTYGLTDYSEMPKEARNYISRLEELLGVPITIISTGPDRKHTIVRQAVFNQVITAKG</sequence>
<proteinExistence type="inferred from homology"/>
<protein>
    <recommendedName>
        <fullName evidence="1">Adenylosuccinate synthetase</fullName>
        <shortName evidence="1">AMPSase</shortName>
        <shortName evidence="1">AdSS</shortName>
        <ecNumber evidence="1">6.3.4.4</ecNumber>
    </recommendedName>
    <alternativeName>
        <fullName evidence="1">IMP--aspartate ligase</fullName>
    </alternativeName>
</protein>
<organism>
    <name type="scientific">Coxiella burnetii (strain Dugway 5J108-111)</name>
    <dbReference type="NCBI Taxonomy" id="434922"/>
    <lineage>
        <taxon>Bacteria</taxon>
        <taxon>Pseudomonadati</taxon>
        <taxon>Pseudomonadota</taxon>
        <taxon>Gammaproteobacteria</taxon>
        <taxon>Legionellales</taxon>
        <taxon>Coxiellaceae</taxon>
        <taxon>Coxiella</taxon>
    </lineage>
</organism>